<keyword id="KW-0963">Cytoplasm</keyword>
<keyword id="KW-0255">Endonuclease</keyword>
<keyword id="KW-0378">Hydrolase</keyword>
<keyword id="KW-0479">Metal-binding</keyword>
<keyword id="KW-0540">Nuclease</keyword>
<keyword id="KW-0690">Ribosome biogenesis</keyword>
<keyword id="KW-0698">rRNA processing</keyword>
<keyword id="KW-0862">Zinc</keyword>
<organism>
    <name type="scientific">Staphylococcus aureus (strain COL)</name>
    <dbReference type="NCBI Taxonomy" id="93062"/>
    <lineage>
        <taxon>Bacteria</taxon>
        <taxon>Bacillati</taxon>
        <taxon>Bacillota</taxon>
        <taxon>Bacilli</taxon>
        <taxon>Bacillales</taxon>
        <taxon>Staphylococcaceae</taxon>
        <taxon>Staphylococcus</taxon>
    </lineage>
</organism>
<feature type="chain" id="PRO_0000102527" description="Endoribonuclease YbeY">
    <location>
        <begin position="1"/>
        <end position="155"/>
    </location>
</feature>
<feature type="binding site" evidence="1">
    <location>
        <position position="120"/>
    </location>
    <ligand>
        <name>Zn(2+)</name>
        <dbReference type="ChEBI" id="CHEBI:29105"/>
        <note>catalytic</note>
    </ligand>
</feature>
<feature type="binding site" evidence="1">
    <location>
        <position position="124"/>
    </location>
    <ligand>
        <name>Zn(2+)</name>
        <dbReference type="ChEBI" id="CHEBI:29105"/>
        <note>catalytic</note>
    </ligand>
</feature>
<feature type="binding site" evidence="1">
    <location>
        <position position="130"/>
    </location>
    <ligand>
        <name>Zn(2+)</name>
        <dbReference type="ChEBI" id="CHEBI:29105"/>
        <note>catalytic</note>
    </ligand>
</feature>
<reference key="1">
    <citation type="journal article" date="2005" name="J. Bacteriol.">
        <title>Insights on evolution of virulence and resistance from the complete genome analysis of an early methicillin-resistant Staphylococcus aureus strain and a biofilm-producing methicillin-resistant Staphylococcus epidermidis strain.</title>
        <authorList>
            <person name="Gill S.R."/>
            <person name="Fouts D.E."/>
            <person name="Archer G.L."/>
            <person name="Mongodin E.F."/>
            <person name="DeBoy R.T."/>
            <person name="Ravel J."/>
            <person name="Paulsen I.T."/>
            <person name="Kolonay J.F."/>
            <person name="Brinkac L.M."/>
            <person name="Beanan M.J."/>
            <person name="Dodson R.J."/>
            <person name="Daugherty S.C."/>
            <person name="Madupu R."/>
            <person name="Angiuoli S.V."/>
            <person name="Durkin A.S."/>
            <person name="Haft D.H."/>
            <person name="Vamathevan J.J."/>
            <person name="Khouri H."/>
            <person name="Utterback T.R."/>
            <person name="Lee C."/>
            <person name="Dimitrov G."/>
            <person name="Jiang L."/>
            <person name="Qin H."/>
            <person name="Weidman J."/>
            <person name="Tran K."/>
            <person name="Kang K.H."/>
            <person name="Hance I.R."/>
            <person name="Nelson K.E."/>
            <person name="Fraser C.M."/>
        </authorList>
    </citation>
    <scope>NUCLEOTIDE SEQUENCE [LARGE SCALE GENOMIC DNA]</scope>
    <source>
        <strain>COL</strain>
    </source>
</reference>
<proteinExistence type="inferred from homology"/>
<dbReference type="EC" id="3.1.-.-" evidence="1"/>
<dbReference type="EMBL" id="CP000046">
    <property type="protein sequence ID" value="AAW38243.1"/>
    <property type="molecule type" value="Genomic_DNA"/>
</dbReference>
<dbReference type="RefSeq" id="WP_000494134.1">
    <property type="nucleotide sequence ID" value="NZ_JBGOFO010000003.1"/>
</dbReference>
<dbReference type="SMR" id="Q5HFJ0"/>
<dbReference type="KEGG" id="sac:SACOL1627"/>
<dbReference type="HOGENOM" id="CLU_106710_3_0_9"/>
<dbReference type="Proteomes" id="UP000000530">
    <property type="component" value="Chromosome"/>
</dbReference>
<dbReference type="GO" id="GO:0005737">
    <property type="term" value="C:cytoplasm"/>
    <property type="evidence" value="ECO:0007669"/>
    <property type="project" value="UniProtKB-SubCell"/>
</dbReference>
<dbReference type="GO" id="GO:0004222">
    <property type="term" value="F:metalloendopeptidase activity"/>
    <property type="evidence" value="ECO:0007669"/>
    <property type="project" value="InterPro"/>
</dbReference>
<dbReference type="GO" id="GO:0004521">
    <property type="term" value="F:RNA endonuclease activity"/>
    <property type="evidence" value="ECO:0007669"/>
    <property type="project" value="UniProtKB-UniRule"/>
</dbReference>
<dbReference type="GO" id="GO:0008270">
    <property type="term" value="F:zinc ion binding"/>
    <property type="evidence" value="ECO:0007669"/>
    <property type="project" value="UniProtKB-UniRule"/>
</dbReference>
<dbReference type="GO" id="GO:0006364">
    <property type="term" value="P:rRNA processing"/>
    <property type="evidence" value="ECO:0007669"/>
    <property type="project" value="UniProtKB-UniRule"/>
</dbReference>
<dbReference type="Gene3D" id="3.40.390.30">
    <property type="entry name" value="Metalloproteases ('zincins'), catalytic domain"/>
    <property type="match status" value="1"/>
</dbReference>
<dbReference type="HAMAP" id="MF_00009">
    <property type="entry name" value="Endoribonucl_YbeY"/>
    <property type="match status" value="1"/>
</dbReference>
<dbReference type="InterPro" id="IPR023091">
    <property type="entry name" value="MetalPrtase_cat_dom_sf_prd"/>
</dbReference>
<dbReference type="InterPro" id="IPR002036">
    <property type="entry name" value="YbeY"/>
</dbReference>
<dbReference type="InterPro" id="IPR020549">
    <property type="entry name" value="YbeY_CS"/>
</dbReference>
<dbReference type="NCBIfam" id="TIGR00043">
    <property type="entry name" value="rRNA maturation RNase YbeY"/>
    <property type="match status" value="1"/>
</dbReference>
<dbReference type="PANTHER" id="PTHR46986">
    <property type="entry name" value="ENDORIBONUCLEASE YBEY, CHLOROPLASTIC"/>
    <property type="match status" value="1"/>
</dbReference>
<dbReference type="PANTHER" id="PTHR46986:SF1">
    <property type="entry name" value="ENDORIBONUCLEASE YBEY, CHLOROPLASTIC"/>
    <property type="match status" value="1"/>
</dbReference>
<dbReference type="Pfam" id="PF02130">
    <property type="entry name" value="YbeY"/>
    <property type="match status" value="1"/>
</dbReference>
<dbReference type="SUPFAM" id="SSF55486">
    <property type="entry name" value="Metalloproteases ('zincins'), catalytic domain"/>
    <property type="match status" value="1"/>
</dbReference>
<dbReference type="PROSITE" id="PS01306">
    <property type="entry name" value="UPF0054"/>
    <property type="match status" value="1"/>
</dbReference>
<comment type="function">
    <text evidence="1">Single strand-specific metallo-endoribonuclease involved in late-stage 70S ribosome quality control and in maturation of the 3' terminus of the 16S rRNA.</text>
</comment>
<comment type="cofactor">
    <cofactor evidence="1">
        <name>Zn(2+)</name>
        <dbReference type="ChEBI" id="CHEBI:29105"/>
    </cofactor>
    <text evidence="1">Binds 1 zinc ion.</text>
</comment>
<comment type="subcellular location">
    <subcellularLocation>
        <location evidence="1">Cytoplasm</location>
    </subcellularLocation>
</comment>
<comment type="similarity">
    <text evidence="1">Belongs to the endoribonuclease YbeY family.</text>
</comment>
<gene>
    <name evidence="1" type="primary">ybeY</name>
    <name type="ordered locus">SACOL1627</name>
</gene>
<protein>
    <recommendedName>
        <fullName evidence="1">Endoribonuclease YbeY</fullName>
        <ecNumber evidence="1">3.1.-.-</ecNumber>
    </recommendedName>
</protein>
<evidence type="ECO:0000255" key="1">
    <source>
        <dbReference type="HAMAP-Rule" id="MF_00009"/>
    </source>
</evidence>
<accession>Q5HFJ0</accession>
<sequence>MFTIDFSDHTGLVKDAWYKQIEDLLEFAKKEEHIEDDAELSVTFVDKQEIQEINRTYRDKDKVTDVISFALEEDEPEIDFSGLDIPRVLGDIIICTDVAQEQANNYGHSFERELGFLALHGFLHLLGYDHMTEADEKEMFGRQDTILNAYGLTRD</sequence>
<name>YBEY_STAAC</name>